<gene>
    <name evidence="1" type="primary">fusA</name>
    <name type="ordered locus">Franean1_6052</name>
</gene>
<reference key="1">
    <citation type="journal article" date="2007" name="Genome Res.">
        <title>Genome characteristics of facultatively symbiotic Frankia sp. strains reflect host range and host plant biogeography.</title>
        <authorList>
            <person name="Normand P."/>
            <person name="Lapierre P."/>
            <person name="Tisa L.S."/>
            <person name="Gogarten J.P."/>
            <person name="Alloisio N."/>
            <person name="Bagnarol E."/>
            <person name="Bassi C.A."/>
            <person name="Berry A.M."/>
            <person name="Bickhart D.M."/>
            <person name="Choisne N."/>
            <person name="Couloux A."/>
            <person name="Cournoyer B."/>
            <person name="Cruveiller S."/>
            <person name="Daubin V."/>
            <person name="Demange N."/>
            <person name="Francino M.P."/>
            <person name="Goltsman E."/>
            <person name="Huang Y."/>
            <person name="Kopp O.R."/>
            <person name="Labarre L."/>
            <person name="Lapidus A."/>
            <person name="Lavire C."/>
            <person name="Marechal J."/>
            <person name="Martinez M."/>
            <person name="Mastronunzio J.E."/>
            <person name="Mullin B.C."/>
            <person name="Niemann J."/>
            <person name="Pujic P."/>
            <person name="Rawnsley T."/>
            <person name="Rouy Z."/>
            <person name="Schenowitz C."/>
            <person name="Sellstedt A."/>
            <person name="Tavares F."/>
            <person name="Tomkins J.P."/>
            <person name="Vallenet D."/>
            <person name="Valverde C."/>
            <person name="Wall L.G."/>
            <person name="Wang Y."/>
            <person name="Medigue C."/>
            <person name="Benson D.R."/>
        </authorList>
    </citation>
    <scope>NUCLEOTIDE SEQUENCE [LARGE SCALE GENOMIC DNA]</scope>
    <source>
        <strain>EAN1pec</strain>
    </source>
</reference>
<accession>A8LC59</accession>
<protein>
    <recommendedName>
        <fullName evidence="1">Elongation factor G</fullName>
        <shortName evidence="1">EF-G</shortName>
    </recommendedName>
</protein>
<dbReference type="EMBL" id="CP000820">
    <property type="protein sequence ID" value="ABW15396.1"/>
    <property type="molecule type" value="Genomic_DNA"/>
</dbReference>
<dbReference type="RefSeq" id="WP_020463480.1">
    <property type="nucleotide sequence ID" value="NC_009921.1"/>
</dbReference>
<dbReference type="SMR" id="A8LC59"/>
<dbReference type="STRING" id="298653.Franean1_6052"/>
<dbReference type="KEGG" id="fre:Franean1_6052"/>
<dbReference type="eggNOG" id="COG0480">
    <property type="taxonomic scope" value="Bacteria"/>
</dbReference>
<dbReference type="HOGENOM" id="CLU_002794_4_1_11"/>
<dbReference type="GO" id="GO:0005737">
    <property type="term" value="C:cytoplasm"/>
    <property type="evidence" value="ECO:0007669"/>
    <property type="project" value="UniProtKB-SubCell"/>
</dbReference>
<dbReference type="GO" id="GO:0005525">
    <property type="term" value="F:GTP binding"/>
    <property type="evidence" value="ECO:0007669"/>
    <property type="project" value="UniProtKB-UniRule"/>
</dbReference>
<dbReference type="GO" id="GO:0003924">
    <property type="term" value="F:GTPase activity"/>
    <property type="evidence" value="ECO:0007669"/>
    <property type="project" value="InterPro"/>
</dbReference>
<dbReference type="GO" id="GO:0003746">
    <property type="term" value="F:translation elongation factor activity"/>
    <property type="evidence" value="ECO:0007669"/>
    <property type="project" value="UniProtKB-UniRule"/>
</dbReference>
<dbReference type="GO" id="GO:0032790">
    <property type="term" value="P:ribosome disassembly"/>
    <property type="evidence" value="ECO:0007669"/>
    <property type="project" value="TreeGrafter"/>
</dbReference>
<dbReference type="CDD" id="cd01886">
    <property type="entry name" value="EF-G"/>
    <property type="match status" value="1"/>
</dbReference>
<dbReference type="CDD" id="cd16262">
    <property type="entry name" value="EFG_III"/>
    <property type="match status" value="1"/>
</dbReference>
<dbReference type="CDD" id="cd01434">
    <property type="entry name" value="EFG_mtEFG1_IV"/>
    <property type="match status" value="1"/>
</dbReference>
<dbReference type="CDD" id="cd03713">
    <property type="entry name" value="EFG_mtEFG_C"/>
    <property type="match status" value="1"/>
</dbReference>
<dbReference type="CDD" id="cd04088">
    <property type="entry name" value="EFG_mtEFG_II"/>
    <property type="match status" value="1"/>
</dbReference>
<dbReference type="FunFam" id="2.40.30.10:FF:000006">
    <property type="entry name" value="Elongation factor G"/>
    <property type="match status" value="1"/>
</dbReference>
<dbReference type="FunFam" id="3.30.230.10:FF:000003">
    <property type="entry name" value="Elongation factor G"/>
    <property type="match status" value="1"/>
</dbReference>
<dbReference type="FunFam" id="3.30.70.240:FF:000001">
    <property type="entry name" value="Elongation factor G"/>
    <property type="match status" value="1"/>
</dbReference>
<dbReference type="FunFam" id="3.30.70.870:FF:000001">
    <property type="entry name" value="Elongation factor G"/>
    <property type="match status" value="1"/>
</dbReference>
<dbReference type="FunFam" id="3.40.50.300:FF:000029">
    <property type="entry name" value="Elongation factor G"/>
    <property type="match status" value="1"/>
</dbReference>
<dbReference type="Gene3D" id="3.30.230.10">
    <property type="match status" value="1"/>
</dbReference>
<dbReference type="Gene3D" id="3.30.70.240">
    <property type="match status" value="1"/>
</dbReference>
<dbReference type="Gene3D" id="3.30.70.870">
    <property type="entry name" value="Elongation Factor G (Translational Gtpase), domain 3"/>
    <property type="match status" value="1"/>
</dbReference>
<dbReference type="Gene3D" id="3.40.50.300">
    <property type="entry name" value="P-loop containing nucleotide triphosphate hydrolases"/>
    <property type="match status" value="1"/>
</dbReference>
<dbReference type="Gene3D" id="2.40.30.10">
    <property type="entry name" value="Translation factors"/>
    <property type="match status" value="1"/>
</dbReference>
<dbReference type="HAMAP" id="MF_00054_B">
    <property type="entry name" value="EF_G_EF_2_B"/>
    <property type="match status" value="1"/>
</dbReference>
<dbReference type="InterPro" id="IPR053905">
    <property type="entry name" value="EF-G-like_DII"/>
</dbReference>
<dbReference type="InterPro" id="IPR041095">
    <property type="entry name" value="EFG_II"/>
</dbReference>
<dbReference type="InterPro" id="IPR009022">
    <property type="entry name" value="EFG_III"/>
</dbReference>
<dbReference type="InterPro" id="IPR035647">
    <property type="entry name" value="EFG_III/V"/>
</dbReference>
<dbReference type="InterPro" id="IPR047872">
    <property type="entry name" value="EFG_IV"/>
</dbReference>
<dbReference type="InterPro" id="IPR035649">
    <property type="entry name" value="EFG_V"/>
</dbReference>
<dbReference type="InterPro" id="IPR000640">
    <property type="entry name" value="EFG_V-like"/>
</dbReference>
<dbReference type="InterPro" id="IPR031157">
    <property type="entry name" value="G_TR_CS"/>
</dbReference>
<dbReference type="InterPro" id="IPR027417">
    <property type="entry name" value="P-loop_NTPase"/>
</dbReference>
<dbReference type="InterPro" id="IPR020568">
    <property type="entry name" value="Ribosomal_Su5_D2-typ_SF"/>
</dbReference>
<dbReference type="InterPro" id="IPR014721">
    <property type="entry name" value="Ribsml_uS5_D2-typ_fold_subgr"/>
</dbReference>
<dbReference type="InterPro" id="IPR005225">
    <property type="entry name" value="Small_GTP-bd"/>
</dbReference>
<dbReference type="InterPro" id="IPR000795">
    <property type="entry name" value="T_Tr_GTP-bd_dom"/>
</dbReference>
<dbReference type="InterPro" id="IPR009000">
    <property type="entry name" value="Transl_B-barrel_sf"/>
</dbReference>
<dbReference type="InterPro" id="IPR004540">
    <property type="entry name" value="Transl_elong_EFG/EF2"/>
</dbReference>
<dbReference type="InterPro" id="IPR005517">
    <property type="entry name" value="Transl_elong_EFG/EF2_IV"/>
</dbReference>
<dbReference type="NCBIfam" id="TIGR00484">
    <property type="entry name" value="EF-G"/>
    <property type="match status" value="1"/>
</dbReference>
<dbReference type="NCBIfam" id="NF009379">
    <property type="entry name" value="PRK12740.1-3"/>
    <property type="match status" value="1"/>
</dbReference>
<dbReference type="NCBIfam" id="NF009381">
    <property type="entry name" value="PRK12740.1-5"/>
    <property type="match status" value="1"/>
</dbReference>
<dbReference type="NCBIfam" id="TIGR00231">
    <property type="entry name" value="small_GTP"/>
    <property type="match status" value="1"/>
</dbReference>
<dbReference type="PANTHER" id="PTHR43261:SF1">
    <property type="entry name" value="RIBOSOME-RELEASING FACTOR 2, MITOCHONDRIAL"/>
    <property type="match status" value="1"/>
</dbReference>
<dbReference type="PANTHER" id="PTHR43261">
    <property type="entry name" value="TRANSLATION ELONGATION FACTOR G-RELATED"/>
    <property type="match status" value="1"/>
</dbReference>
<dbReference type="Pfam" id="PF22042">
    <property type="entry name" value="EF-G_D2"/>
    <property type="match status" value="1"/>
</dbReference>
<dbReference type="Pfam" id="PF00679">
    <property type="entry name" value="EFG_C"/>
    <property type="match status" value="1"/>
</dbReference>
<dbReference type="Pfam" id="PF14492">
    <property type="entry name" value="EFG_III"/>
    <property type="match status" value="1"/>
</dbReference>
<dbReference type="Pfam" id="PF03764">
    <property type="entry name" value="EFG_IV"/>
    <property type="match status" value="1"/>
</dbReference>
<dbReference type="Pfam" id="PF00009">
    <property type="entry name" value="GTP_EFTU"/>
    <property type="match status" value="1"/>
</dbReference>
<dbReference type="PRINTS" id="PR00315">
    <property type="entry name" value="ELONGATNFCT"/>
</dbReference>
<dbReference type="SMART" id="SM00838">
    <property type="entry name" value="EFG_C"/>
    <property type="match status" value="1"/>
</dbReference>
<dbReference type="SMART" id="SM00889">
    <property type="entry name" value="EFG_IV"/>
    <property type="match status" value="1"/>
</dbReference>
<dbReference type="SUPFAM" id="SSF54980">
    <property type="entry name" value="EF-G C-terminal domain-like"/>
    <property type="match status" value="2"/>
</dbReference>
<dbReference type="SUPFAM" id="SSF52540">
    <property type="entry name" value="P-loop containing nucleoside triphosphate hydrolases"/>
    <property type="match status" value="1"/>
</dbReference>
<dbReference type="SUPFAM" id="SSF54211">
    <property type="entry name" value="Ribosomal protein S5 domain 2-like"/>
    <property type="match status" value="1"/>
</dbReference>
<dbReference type="SUPFAM" id="SSF50447">
    <property type="entry name" value="Translation proteins"/>
    <property type="match status" value="1"/>
</dbReference>
<dbReference type="PROSITE" id="PS00301">
    <property type="entry name" value="G_TR_1"/>
    <property type="match status" value="1"/>
</dbReference>
<dbReference type="PROSITE" id="PS51722">
    <property type="entry name" value="G_TR_2"/>
    <property type="match status" value="1"/>
</dbReference>
<name>EFG_PARS2</name>
<sequence length="698" mass="76676">MAADAHAALAATRNIGIMAHIDAGKTTTTERILFYTGVNYKIGEVHEGGATMDWMEQEQERGITITSAATTCSWRDHTINIIDTPGHVDFTVEVERSLRVLDGAVAVFDAVAGVEPQSETVWKQADRYDVPRIAFVNKMDRVGAEFHRCVDMMVDRLDATPAVIQLPWGVEADFRGVIDLIRMKGLLWHTEDKGASFETVDIPTDHAEAAQEWREKLVETVAENDDELMELYLEGVEPTEEQLMAALRRATVASKINPVLCGSAFKNKGVQPMLDAVVDFLPSPTDIGSVTGHSVGKEDTEVVRRADEDEPFSALAFKIMSDPYVGKLTYIRVYSGRITSGTAVLNSTKDRKERIGRILQMHANHREDRDGVGAGQIVAVVGLKNTTTGDTLCDPNSPVILESMIFPAPVIDVAIEPKTKADQQKLGTAIQRLTEEDPTFQVRTDEETGQTVIAGMGELHLEVFVDRMRREYGVEANVGKPQVAYRETIRRKVEKVDYTHKKQTGGSGQYARVIIDLEPSGGDGGGYEFENKVTGGRIPREFIPSVDAGCQEAMEFGVLAGYPLVDVKVTLRDGQFHEVDSSELAFKIAGSMAFKDAARKADPVILEPMMSVEVTTPEDHMGDVIGDLNSRRGQIQAMDERGGSRIVKALVPLSEMFGYVGDLRSKTSGRASYSMQFDSYAEVPQNVAKDIIAKARGE</sequence>
<comment type="function">
    <text evidence="1">Catalyzes the GTP-dependent ribosomal translocation step during translation elongation. During this step, the ribosome changes from the pre-translocational (PRE) to the post-translocational (POST) state as the newly formed A-site-bound peptidyl-tRNA and P-site-bound deacylated tRNA move to the P and E sites, respectively. Catalyzes the coordinated movement of the two tRNA molecules, the mRNA and conformational changes in the ribosome.</text>
</comment>
<comment type="subcellular location">
    <subcellularLocation>
        <location evidence="1">Cytoplasm</location>
    </subcellularLocation>
</comment>
<comment type="similarity">
    <text evidence="1">Belongs to the TRAFAC class translation factor GTPase superfamily. Classic translation factor GTPase family. EF-G/EF-2 subfamily.</text>
</comment>
<organism>
    <name type="scientific">Parafrankia sp. (strain EAN1pec)</name>
    <dbReference type="NCBI Taxonomy" id="298653"/>
    <lineage>
        <taxon>Bacteria</taxon>
        <taxon>Bacillati</taxon>
        <taxon>Actinomycetota</taxon>
        <taxon>Actinomycetes</taxon>
        <taxon>Frankiales</taxon>
        <taxon>Frankiaceae</taxon>
        <taxon>Parafrankia</taxon>
    </lineage>
</organism>
<evidence type="ECO:0000255" key="1">
    <source>
        <dbReference type="HAMAP-Rule" id="MF_00054"/>
    </source>
</evidence>
<proteinExistence type="inferred from homology"/>
<keyword id="KW-0963">Cytoplasm</keyword>
<keyword id="KW-0251">Elongation factor</keyword>
<keyword id="KW-0342">GTP-binding</keyword>
<keyword id="KW-0547">Nucleotide-binding</keyword>
<keyword id="KW-0648">Protein biosynthesis</keyword>
<feature type="chain" id="PRO_1000091713" description="Elongation factor G">
    <location>
        <begin position="1"/>
        <end position="698"/>
    </location>
</feature>
<feature type="domain" description="tr-type G">
    <location>
        <begin position="10"/>
        <end position="285"/>
    </location>
</feature>
<feature type="binding site" evidence="1">
    <location>
        <begin position="19"/>
        <end position="26"/>
    </location>
    <ligand>
        <name>GTP</name>
        <dbReference type="ChEBI" id="CHEBI:37565"/>
    </ligand>
</feature>
<feature type="binding site" evidence="1">
    <location>
        <begin position="83"/>
        <end position="87"/>
    </location>
    <ligand>
        <name>GTP</name>
        <dbReference type="ChEBI" id="CHEBI:37565"/>
    </ligand>
</feature>
<feature type="binding site" evidence="1">
    <location>
        <begin position="137"/>
        <end position="140"/>
    </location>
    <ligand>
        <name>GTP</name>
        <dbReference type="ChEBI" id="CHEBI:37565"/>
    </ligand>
</feature>